<protein>
    <recommendedName>
        <fullName>Uncharacterized protein 017L</fullName>
    </recommendedName>
</protein>
<organism>
    <name type="scientific">Frog virus 3 (isolate Goorha)</name>
    <name type="common">FV-3</name>
    <dbReference type="NCBI Taxonomy" id="654924"/>
    <lineage>
        <taxon>Viruses</taxon>
        <taxon>Varidnaviria</taxon>
        <taxon>Bamfordvirae</taxon>
        <taxon>Nucleocytoviricota</taxon>
        <taxon>Megaviricetes</taxon>
        <taxon>Pimascovirales</taxon>
        <taxon>Iridoviridae</taxon>
        <taxon>Alphairidovirinae</taxon>
        <taxon>Ranavirus</taxon>
        <taxon>Frog virus 3</taxon>
    </lineage>
</organism>
<accession>Q6GZV8</accession>
<organismHost>
    <name type="scientific">Dryophytes versicolor</name>
    <name type="common">chameleon treefrog</name>
    <dbReference type="NCBI Taxonomy" id="30343"/>
</organismHost>
<organismHost>
    <name type="scientific">Lithobates pipiens</name>
    <name type="common">Northern leopard frog</name>
    <name type="synonym">Rana pipiens</name>
    <dbReference type="NCBI Taxonomy" id="8404"/>
</organismHost>
<organismHost>
    <name type="scientific">Lithobates sylvaticus</name>
    <name type="common">Wood frog</name>
    <name type="synonym">Rana sylvatica</name>
    <dbReference type="NCBI Taxonomy" id="45438"/>
</organismHost>
<organismHost>
    <name type="scientific">Notophthalmus viridescens</name>
    <name type="common">Eastern newt</name>
    <name type="synonym">Triturus viridescens</name>
    <dbReference type="NCBI Taxonomy" id="8316"/>
</organismHost>
<keyword id="KW-1185">Reference proteome</keyword>
<dbReference type="EMBL" id="AY548484">
    <property type="protein sequence ID" value="AAT09676.1"/>
    <property type="molecule type" value="Genomic_DNA"/>
</dbReference>
<dbReference type="RefSeq" id="YP_031595.1">
    <property type="nucleotide sequence ID" value="NC_005946.1"/>
</dbReference>
<dbReference type="SMR" id="Q6GZV8"/>
<dbReference type="KEGG" id="vg:2947737"/>
<dbReference type="Proteomes" id="UP000008770">
    <property type="component" value="Segment"/>
</dbReference>
<feature type="chain" id="PRO_0000410557" description="Uncharacterized protein 017L">
    <location>
        <begin position="1"/>
        <end position="502"/>
    </location>
</feature>
<sequence>METMSDYSKEVSEALSALRGELSALSAAISNTVRAGSYSAPVAKDCKAGHCDSKAVLKSLSRSARDLDSAVEAVSSNCEWASSGYGKQIARALRDDAVRVKREVESTRDAVDVVTPSCCVQGLAEEAGKLSEMAAVYRCMATVFETADSHGVREMLAKVDGLKQTMSGFKRLLGKTAEIDGLSDSVIRLGRSIGEVLPATEGKAMRDLVKQCERLNGLVVDGSRKVEEQCSKLRDMASQSYVVADLASQYDVLGGKAQEALSASDALEQAAAVALRAKAAADAVAKSLDSLDVKKLDRLLEQASAVSGLLAKKNDLDAVVTSLAGLEALVAKKDELYKICAAVNSVDKSKLELLNVKPDRLKSLTEQTVVVSQMTTALATFNEDKLDSVLGKYMQMHRFLGMATQLKLMSDSLAEFQPAKMAQMAAAASQLKDFLTDQTVSRLEKVSAAVDATDVTKYASAFSDGGMVSDMTKAYETVKAFAAVVNSLDSKKLKLVAECAKK</sequence>
<gene>
    <name type="ORF">FV3-017L</name>
</gene>
<reference key="1">
    <citation type="journal article" date="2004" name="Virology">
        <title>Comparative genomic analyses of frog virus 3, type species of the genus Ranavirus (family Iridoviridae).</title>
        <authorList>
            <person name="Tan W.G."/>
            <person name="Barkman T.J."/>
            <person name="Gregory Chinchar V."/>
            <person name="Essani K."/>
        </authorList>
    </citation>
    <scope>NUCLEOTIDE SEQUENCE [LARGE SCALE GENOMIC DNA]</scope>
</reference>
<proteinExistence type="predicted"/>
<name>017L_FRG3G</name>